<organism>
    <name type="scientific">Shigella sonnei (strain Ss046)</name>
    <dbReference type="NCBI Taxonomy" id="300269"/>
    <lineage>
        <taxon>Bacteria</taxon>
        <taxon>Pseudomonadati</taxon>
        <taxon>Pseudomonadota</taxon>
        <taxon>Gammaproteobacteria</taxon>
        <taxon>Enterobacterales</taxon>
        <taxon>Enterobacteriaceae</taxon>
        <taxon>Shigella</taxon>
    </lineage>
</organism>
<dbReference type="EC" id="6.3.2.2" evidence="1"/>
<dbReference type="EMBL" id="CP000038">
    <property type="protein sequence ID" value="AAZ87300.1"/>
    <property type="molecule type" value="Genomic_DNA"/>
</dbReference>
<dbReference type="RefSeq" id="WP_001130635.1">
    <property type="nucleotide sequence ID" value="NC_007384.1"/>
</dbReference>
<dbReference type="SMR" id="Q3Z4L2"/>
<dbReference type="KEGG" id="ssn:SSON_0532"/>
<dbReference type="HOGENOM" id="CLU_044848_1_1_6"/>
<dbReference type="Proteomes" id="UP000002529">
    <property type="component" value="Chromosome"/>
</dbReference>
<dbReference type="GO" id="GO:0005524">
    <property type="term" value="F:ATP binding"/>
    <property type="evidence" value="ECO:0007669"/>
    <property type="project" value="UniProtKB-KW"/>
</dbReference>
<dbReference type="GO" id="GO:0004357">
    <property type="term" value="F:glutamate-cysteine ligase activity"/>
    <property type="evidence" value="ECO:0007669"/>
    <property type="project" value="UniProtKB-EC"/>
</dbReference>
<dbReference type="GO" id="GO:0042398">
    <property type="term" value="P:modified amino acid biosynthetic process"/>
    <property type="evidence" value="ECO:0007669"/>
    <property type="project" value="InterPro"/>
</dbReference>
<dbReference type="FunFam" id="3.30.590.20:FF:000002">
    <property type="entry name" value="Putative glutamate--cysteine ligase 2"/>
    <property type="match status" value="1"/>
</dbReference>
<dbReference type="Gene3D" id="3.30.590.20">
    <property type="match status" value="1"/>
</dbReference>
<dbReference type="HAMAP" id="MF_01609">
    <property type="entry name" value="Glu_cys_ligase_2"/>
    <property type="match status" value="1"/>
</dbReference>
<dbReference type="InterPro" id="IPR050141">
    <property type="entry name" value="GCL_type2/YbdK_subfam"/>
</dbReference>
<dbReference type="InterPro" id="IPR006336">
    <property type="entry name" value="GCS2"/>
</dbReference>
<dbReference type="InterPro" id="IPR014746">
    <property type="entry name" value="Gln_synth/guanido_kin_cat_dom"/>
</dbReference>
<dbReference type="InterPro" id="IPR011793">
    <property type="entry name" value="YbdK"/>
</dbReference>
<dbReference type="NCBIfam" id="TIGR02050">
    <property type="entry name" value="gshA_cyan_rel"/>
    <property type="match status" value="1"/>
</dbReference>
<dbReference type="NCBIfam" id="NF010040">
    <property type="entry name" value="PRK13516.1"/>
    <property type="match status" value="1"/>
</dbReference>
<dbReference type="PANTHER" id="PTHR36510">
    <property type="entry name" value="GLUTAMATE--CYSTEINE LIGASE 2-RELATED"/>
    <property type="match status" value="1"/>
</dbReference>
<dbReference type="PANTHER" id="PTHR36510:SF1">
    <property type="entry name" value="GLUTAMATE--CYSTEINE LIGASE 2-RELATED"/>
    <property type="match status" value="1"/>
</dbReference>
<dbReference type="Pfam" id="PF04107">
    <property type="entry name" value="GCS2"/>
    <property type="match status" value="1"/>
</dbReference>
<dbReference type="SUPFAM" id="SSF55931">
    <property type="entry name" value="Glutamine synthetase/guanido kinase"/>
    <property type="match status" value="1"/>
</dbReference>
<name>GCS2_SHISS</name>
<reference key="1">
    <citation type="journal article" date="2005" name="Nucleic Acids Res.">
        <title>Genome dynamics and diversity of Shigella species, the etiologic agents of bacillary dysentery.</title>
        <authorList>
            <person name="Yang F."/>
            <person name="Yang J."/>
            <person name="Zhang X."/>
            <person name="Chen L."/>
            <person name="Jiang Y."/>
            <person name="Yan Y."/>
            <person name="Tang X."/>
            <person name="Wang J."/>
            <person name="Xiong Z."/>
            <person name="Dong J."/>
            <person name="Xue Y."/>
            <person name="Zhu Y."/>
            <person name="Xu X."/>
            <person name="Sun L."/>
            <person name="Chen S."/>
            <person name="Nie H."/>
            <person name="Peng J."/>
            <person name="Xu J."/>
            <person name="Wang Y."/>
            <person name="Yuan Z."/>
            <person name="Wen Y."/>
            <person name="Yao Z."/>
            <person name="Shen Y."/>
            <person name="Qiang B."/>
            <person name="Hou Y."/>
            <person name="Yu J."/>
            <person name="Jin Q."/>
        </authorList>
    </citation>
    <scope>NUCLEOTIDE SEQUENCE [LARGE SCALE GENOMIC DNA]</scope>
    <source>
        <strain>Ss046</strain>
    </source>
</reference>
<evidence type="ECO:0000255" key="1">
    <source>
        <dbReference type="HAMAP-Rule" id="MF_01609"/>
    </source>
</evidence>
<proteinExistence type="inferred from homology"/>
<accession>Q3Z4L2</accession>
<comment type="function">
    <text evidence="1">ATP-dependent carboxylate-amine ligase which exhibits weak glutamate--cysteine ligase activity.</text>
</comment>
<comment type="catalytic activity">
    <reaction evidence="1">
        <text>L-cysteine + L-glutamate + ATP = gamma-L-glutamyl-L-cysteine + ADP + phosphate + H(+)</text>
        <dbReference type="Rhea" id="RHEA:13285"/>
        <dbReference type="ChEBI" id="CHEBI:15378"/>
        <dbReference type="ChEBI" id="CHEBI:29985"/>
        <dbReference type="ChEBI" id="CHEBI:30616"/>
        <dbReference type="ChEBI" id="CHEBI:35235"/>
        <dbReference type="ChEBI" id="CHEBI:43474"/>
        <dbReference type="ChEBI" id="CHEBI:58173"/>
        <dbReference type="ChEBI" id="CHEBI:456216"/>
        <dbReference type="EC" id="6.3.2.2"/>
    </reaction>
</comment>
<comment type="subunit">
    <text evidence="1">Homodimer.</text>
</comment>
<comment type="similarity">
    <text evidence="1">Belongs to the glutamate--cysteine ligase type 2 family. YbdK subfamily.</text>
</comment>
<sequence>MPLPDFHVSEPFTLGIELEMQVVNPPGYDLSQDSSMLIDAVKNKITAGEVKHDITESMLELATDVCRDINQAAGQFSAMQKVVLQAAADHHLEICGGGTHPFQKWQRQEVCDNERYQRTLENFGYLIQQATVFGQHVHVGCASGDDAIYLLHGLSRFVPHFIALSAASPYMQGTDTRFASSRPNIFSAFPDNGPMPWVSNWQQFEALFRCLSYTTMIDSIKDLHWDIRPSPHFGTVEVRVMDTPLTLSHAVNMAGLIQATAHWLLTERPFKHQEKDYLLYKFNRFQACRYGLEGVITDPHTGDRRPLTEDTLRLLEKIAPSAHKIGASSAIEALHRQVVSGLNEAQLMRDFVADGGSLIGLVKKHCEIWADD</sequence>
<keyword id="KW-0067">ATP-binding</keyword>
<keyword id="KW-0436">Ligase</keyword>
<keyword id="KW-0547">Nucleotide-binding</keyword>
<keyword id="KW-1185">Reference proteome</keyword>
<feature type="chain" id="PRO_0000255816" description="Putative glutamate--cysteine ligase 2">
    <location>
        <begin position="1"/>
        <end position="372"/>
    </location>
</feature>
<protein>
    <recommendedName>
        <fullName evidence="1">Putative glutamate--cysteine ligase 2</fullName>
        <ecNumber evidence="1">6.3.2.2</ecNumber>
    </recommendedName>
    <alternativeName>
        <fullName evidence="1">Gamma-glutamylcysteine synthetase 2</fullName>
        <shortName evidence="1">GCS 2</shortName>
        <shortName evidence="1">Gamma-GCS 2</shortName>
    </alternativeName>
</protein>
<gene>
    <name type="primary">ybdK</name>
    <name type="ordered locus">SSON_0532</name>
</gene>